<evidence type="ECO:0000255" key="1">
    <source>
        <dbReference type="HAMAP-Rule" id="MF_01368"/>
    </source>
</evidence>
<evidence type="ECO:0000256" key="2">
    <source>
        <dbReference type="SAM" id="MobiDB-lite"/>
    </source>
</evidence>
<evidence type="ECO:0000305" key="3"/>
<protein>
    <recommendedName>
        <fullName evidence="1">Large ribosomal subunit protein bL17</fullName>
    </recommendedName>
    <alternativeName>
        <fullName evidence="3">50S ribosomal protein L17</fullName>
    </alternativeName>
</protein>
<name>RL17_GEOSL</name>
<organism>
    <name type="scientific">Geobacter sulfurreducens (strain ATCC 51573 / DSM 12127 / PCA)</name>
    <dbReference type="NCBI Taxonomy" id="243231"/>
    <lineage>
        <taxon>Bacteria</taxon>
        <taxon>Pseudomonadati</taxon>
        <taxon>Thermodesulfobacteriota</taxon>
        <taxon>Desulfuromonadia</taxon>
        <taxon>Geobacterales</taxon>
        <taxon>Geobacteraceae</taxon>
        <taxon>Geobacter</taxon>
    </lineage>
</organism>
<accession>Q749B4</accession>
<gene>
    <name evidence="1" type="primary">rplQ</name>
    <name type="ordered locus">GSU2830</name>
</gene>
<keyword id="KW-1185">Reference proteome</keyword>
<keyword id="KW-0687">Ribonucleoprotein</keyword>
<keyword id="KW-0689">Ribosomal protein</keyword>
<dbReference type="EMBL" id="AE017180">
    <property type="protein sequence ID" value="AAR36223.1"/>
    <property type="molecule type" value="Genomic_DNA"/>
</dbReference>
<dbReference type="RefSeq" id="NP_953873.1">
    <property type="nucleotide sequence ID" value="NC_002939.5"/>
</dbReference>
<dbReference type="RefSeq" id="WP_010943458.1">
    <property type="nucleotide sequence ID" value="NC_002939.5"/>
</dbReference>
<dbReference type="SMR" id="Q749B4"/>
<dbReference type="FunCoup" id="Q749B4">
    <property type="interactions" value="667"/>
</dbReference>
<dbReference type="STRING" id="243231.GSU2830"/>
<dbReference type="EnsemblBacteria" id="AAR36223">
    <property type="protein sequence ID" value="AAR36223"/>
    <property type="gene ID" value="GSU2830"/>
</dbReference>
<dbReference type="KEGG" id="gsu:GSU2830"/>
<dbReference type="PATRIC" id="fig|243231.5.peg.2855"/>
<dbReference type="eggNOG" id="COG0203">
    <property type="taxonomic scope" value="Bacteria"/>
</dbReference>
<dbReference type="HOGENOM" id="CLU_074407_0_1_7"/>
<dbReference type="InParanoid" id="Q749B4"/>
<dbReference type="OrthoDB" id="9809073at2"/>
<dbReference type="Proteomes" id="UP000000577">
    <property type="component" value="Chromosome"/>
</dbReference>
<dbReference type="GO" id="GO:0022625">
    <property type="term" value="C:cytosolic large ribosomal subunit"/>
    <property type="evidence" value="ECO:0000318"/>
    <property type="project" value="GO_Central"/>
</dbReference>
<dbReference type="GO" id="GO:0003735">
    <property type="term" value="F:structural constituent of ribosome"/>
    <property type="evidence" value="ECO:0000318"/>
    <property type="project" value="GO_Central"/>
</dbReference>
<dbReference type="GO" id="GO:0006412">
    <property type="term" value="P:translation"/>
    <property type="evidence" value="ECO:0007669"/>
    <property type="project" value="UniProtKB-UniRule"/>
</dbReference>
<dbReference type="FunFam" id="3.90.1030.10:FF:000001">
    <property type="entry name" value="50S ribosomal protein L17"/>
    <property type="match status" value="1"/>
</dbReference>
<dbReference type="Gene3D" id="3.90.1030.10">
    <property type="entry name" value="Ribosomal protein L17"/>
    <property type="match status" value="1"/>
</dbReference>
<dbReference type="HAMAP" id="MF_01368">
    <property type="entry name" value="Ribosomal_bL17"/>
    <property type="match status" value="1"/>
</dbReference>
<dbReference type="InterPro" id="IPR000456">
    <property type="entry name" value="Ribosomal_bL17"/>
</dbReference>
<dbReference type="InterPro" id="IPR047859">
    <property type="entry name" value="Ribosomal_bL17_CS"/>
</dbReference>
<dbReference type="InterPro" id="IPR036373">
    <property type="entry name" value="Ribosomal_bL17_sf"/>
</dbReference>
<dbReference type="NCBIfam" id="TIGR00059">
    <property type="entry name" value="L17"/>
    <property type="match status" value="1"/>
</dbReference>
<dbReference type="PANTHER" id="PTHR14413:SF16">
    <property type="entry name" value="LARGE RIBOSOMAL SUBUNIT PROTEIN BL17M"/>
    <property type="match status" value="1"/>
</dbReference>
<dbReference type="PANTHER" id="PTHR14413">
    <property type="entry name" value="RIBOSOMAL PROTEIN L17"/>
    <property type="match status" value="1"/>
</dbReference>
<dbReference type="Pfam" id="PF01196">
    <property type="entry name" value="Ribosomal_L17"/>
    <property type="match status" value="1"/>
</dbReference>
<dbReference type="SUPFAM" id="SSF64263">
    <property type="entry name" value="Prokaryotic ribosomal protein L17"/>
    <property type="match status" value="1"/>
</dbReference>
<dbReference type="PROSITE" id="PS01167">
    <property type="entry name" value="RIBOSOMAL_L17"/>
    <property type="match status" value="1"/>
</dbReference>
<reference key="1">
    <citation type="journal article" date="2003" name="Science">
        <title>Genome of Geobacter sulfurreducens: metal reduction in subsurface environments.</title>
        <authorList>
            <person name="Methe B.A."/>
            <person name="Nelson K.E."/>
            <person name="Eisen J.A."/>
            <person name="Paulsen I.T."/>
            <person name="Nelson W.C."/>
            <person name="Heidelberg J.F."/>
            <person name="Wu D."/>
            <person name="Wu M."/>
            <person name="Ward N.L."/>
            <person name="Beanan M.J."/>
            <person name="Dodson R.J."/>
            <person name="Madupu R."/>
            <person name="Brinkac L.M."/>
            <person name="Daugherty S.C."/>
            <person name="DeBoy R.T."/>
            <person name="Durkin A.S."/>
            <person name="Gwinn M.L."/>
            <person name="Kolonay J.F."/>
            <person name="Sullivan S.A."/>
            <person name="Haft D.H."/>
            <person name="Selengut J."/>
            <person name="Davidsen T.M."/>
            <person name="Zafar N."/>
            <person name="White O."/>
            <person name="Tran B."/>
            <person name="Romero C."/>
            <person name="Forberger H.A."/>
            <person name="Weidman J.F."/>
            <person name="Khouri H.M."/>
            <person name="Feldblyum T.V."/>
            <person name="Utterback T.R."/>
            <person name="Van Aken S.E."/>
            <person name="Lovley D.R."/>
            <person name="Fraser C.M."/>
        </authorList>
    </citation>
    <scope>NUCLEOTIDE SEQUENCE [LARGE SCALE GENOMIC DNA]</scope>
    <source>
        <strain>ATCC 51573 / DSM 12127 / PCA</strain>
    </source>
</reference>
<comment type="subunit">
    <text evidence="1">Part of the 50S ribosomal subunit. Contacts protein L32.</text>
</comment>
<comment type="similarity">
    <text evidence="1">Belongs to the bacterial ribosomal protein bL17 family.</text>
</comment>
<proteinExistence type="inferred from homology"/>
<sequence length="175" mass="19510">MRHNKAGRRLGRTTSHRIAMFRNMVTSLFAHERITTTDAKAKELRSIAEKMITLGKRGDLHAVRQAASYIRDKKVVTKLFSTIAPRYKERDGGYTRIIKLGIRPGDCAPLSVIELVEEQFEKKVKKSKPTAPAQAVATKPAVEETREAAAAQPQEPEVEISEVKDPAEECEAKAD</sequence>
<feature type="chain" id="PRO_0000267875" description="Large ribosomal subunit protein bL17">
    <location>
        <begin position="1"/>
        <end position="175"/>
    </location>
</feature>
<feature type="region of interest" description="Disordered" evidence="2">
    <location>
        <begin position="124"/>
        <end position="175"/>
    </location>
</feature>
<feature type="compositionally biased region" description="Basic and acidic residues" evidence="2">
    <location>
        <begin position="161"/>
        <end position="175"/>
    </location>
</feature>